<feature type="chain" id="PRO_0000113414" description="Malate dehydrogenase, cytoplasmic">
    <location>
        <begin position="1"/>
        <end position="332"/>
    </location>
</feature>
<feature type="active site" description="Proton acceptor" evidence="2">
    <location>
        <position position="188"/>
    </location>
</feature>
<feature type="binding site" evidence="3">
    <location>
        <begin position="16"/>
        <end position="17"/>
    </location>
    <ligand>
        <name>NAD(+)</name>
        <dbReference type="ChEBI" id="CHEBI:57540"/>
    </ligand>
</feature>
<feature type="binding site" evidence="3">
    <location>
        <position position="43"/>
    </location>
    <ligand>
        <name>NAD(+)</name>
        <dbReference type="ChEBI" id="CHEBI:57540"/>
    </ligand>
</feature>
<feature type="binding site" evidence="3">
    <location>
        <position position="90"/>
    </location>
    <ligand>
        <name>NAD(+)</name>
        <dbReference type="ChEBI" id="CHEBI:57540"/>
    </ligand>
</feature>
<feature type="binding site" evidence="3">
    <location>
        <position position="99"/>
    </location>
    <ligand>
        <name>oxaloacetate</name>
        <dbReference type="ChEBI" id="CHEBI:16452"/>
    </ligand>
</feature>
<feature type="binding site" evidence="3">
    <location>
        <position position="113"/>
    </location>
    <ligand>
        <name>NAD(+)</name>
        <dbReference type="ChEBI" id="CHEBI:57540"/>
    </ligand>
</feature>
<feature type="binding site" evidence="3">
    <location>
        <position position="132"/>
    </location>
    <ligand>
        <name>NAD(+)</name>
        <dbReference type="ChEBI" id="CHEBI:57540"/>
    </ligand>
</feature>
<feature type="binding site" evidence="3">
    <location>
        <position position="132"/>
    </location>
    <ligand>
        <name>oxaloacetate</name>
        <dbReference type="ChEBI" id="CHEBI:16452"/>
    </ligand>
</feature>
<feature type="binding site" evidence="3">
    <location>
        <position position="163"/>
    </location>
    <ligand>
        <name>oxaloacetate</name>
        <dbReference type="ChEBI" id="CHEBI:16452"/>
    </ligand>
</feature>
<feature type="binding site" evidence="3">
    <location>
        <position position="188"/>
    </location>
    <ligand>
        <name>oxaloacetate</name>
        <dbReference type="ChEBI" id="CHEBI:16452"/>
    </ligand>
</feature>
<feature type="binding site" evidence="3">
    <location>
        <position position="243"/>
    </location>
    <ligand>
        <name>oxaloacetate</name>
        <dbReference type="ChEBI" id="CHEBI:16452"/>
    </ligand>
</feature>
<comment type="catalytic activity">
    <reaction evidence="4">
        <text>(S)-malate + NAD(+) = oxaloacetate + NADH + H(+)</text>
        <dbReference type="Rhea" id="RHEA:21432"/>
        <dbReference type="ChEBI" id="CHEBI:15378"/>
        <dbReference type="ChEBI" id="CHEBI:15589"/>
        <dbReference type="ChEBI" id="CHEBI:16452"/>
        <dbReference type="ChEBI" id="CHEBI:57540"/>
        <dbReference type="ChEBI" id="CHEBI:57945"/>
        <dbReference type="EC" id="1.1.1.37"/>
    </reaction>
</comment>
<comment type="subunit">
    <text evidence="1">Homodimer.</text>
</comment>
<comment type="subcellular location">
    <subcellularLocation>
        <location evidence="1">Cytoplasm</location>
    </subcellularLocation>
</comment>
<comment type="similarity">
    <text evidence="5">Belongs to the LDH/MDH superfamily. MDH type 2 family.</text>
</comment>
<accession>Q9SML8</accession>
<sequence>MAVEPLRVLVTGAAGQIGYALVPMIARGVMLGANQPVILHMLDIPPAAEALNGVKMELVDAAFPLLKGVVATTDVAEACKGVNVAVMVGGFPRKEGMERKDVMPKNVSIYKSQASALEQYAAPNCKVLVVANPANTNALILKEFAPSIPEKNITCLTRLDHNRALGQISERLNAQVSDVKNVIIWGNHSSSQYPDVNPCTVKTGSGEKAVRELVADDAWLNGEFITTVQQRGAAIIKARKLSSALSAASSACDHIRDWVLGTPEGTWVSMGVYSDGSYNVPAGIIYSFPVTCKDGEWKIVQGLPIDEVSRQKMDATGAELVEEKALAYSCLT</sequence>
<dbReference type="EC" id="1.1.1.37"/>
<dbReference type="EMBL" id="AJ251083">
    <property type="protein sequence ID" value="CAB61618.1"/>
    <property type="molecule type" value="mRNA"/>
</dbReference>
<dbReference type="RefSeq" id="NP_001290006.1">
    <property type="nucleotide sequence ID" value="NM_001303077.1"/>
</dbReference>
<dbReference type="SMR" id="Q9SML8"/>
<dbReference type="GeneID" id="104887939"/>
<dbReference type="KEGG" id="bvg:104887939"/>
<dbReference type="GO" id="GO:0005737">
    <property type="term" value="C:cytoplasm"/>
    <property type="evidence" value="ECO:0007669"/>
    <property type="project" value="UniProtKB-SubCell"/>
</dbReference>
<dbReference type="GO" id="GO:0030060">
    <property type="term" value="F:L-malate dehydrogenase (NAD+) activity"/>
    <property type="evidence" value="ECO:0007669"/>
    <property type="project" value="UniProtKB-EC"/>
</dbReference>
<dbReference type="GO" id="GO:0006108">
    <property type="term" value="P:malate metabolic process"/>
    <property type="evidence" value="ECO:0007669"/>
    <property type="project" value="InterPro"/>
</dbReference>
<dbReference type="GO" id="GO:0006099">
    <property type="term" value="P:tricarboxylic acid cycle"/>
    <property type="evidence" value="ECO:0007669"/>
    <property type="project" value="UniProtKB-KW"/>
</dbReference>
<dbReference type="CDD" id="cd01336">
    <property type="entry name" value="MDH_cytoplasmic_cytosolic"/>
    <property type="match status" value="1"/>
</dbReference>
<dbReference type="FunFam" id="3.40.50.720:FF:000010">
    <property type="entry name" value="Malate dehydrogenase"/>
    <property type="match status" value="1"/>
</dbReference>
<dbReference type="FunFam" id="3.90.110.10:FF:000002">
    <property type="entry name" value="Malate dehydrogenase"/>
    <property type="match status" value="1"/>
</dbReference>
<dbReference type="Gene3D" id="3.90.110.10">
    <property type="entry name" value="Lactate dehydrogenase/glycoside hydrolase, family 4, C-terminal"/>
    <property type="match status" value="1"/>
</dbReference>
<dbReference type="Gene3D" id="3.40.50.720">
    <property type="entry name" value="NAD(P)-binding Rossmann-like Domain"/>
    <property type="match status" value="1"/>
</dbReference>
<dbReference type="InterPro" id="IPR001557">
    <property type="entry name" value="L-lactate/malate_DH"/>
</dbReference>
<dbReference type="InterPro" id="IPR022383">
    <property type="entry name" value="Lactate/malate_DH_C"/>
</dbReference>
<dbReference type="InterPro" id="IPR001236">
    <property type="entry name" value="Lactate/malate_DH_N"/>
</dbReference>
<dbReference type="InterPro" id="IPR015955">
    <property type="entry name" value="Lactate_DH/Glyco_Ohase_4_C"/>
</dbReference>
<dbReference type="InterPro" id="IPR001252">
    <property type="entry name" value="Malate_DH_AS"/>
</dbReference>
<dbReference type="InterPro" id="IPR011274">
    <property type="entry name" value="Malate_DH_NAD-dep_euk"/>
</dbReference>
<dbReference type="InterPro" id="IPR010945">
    <property type="entry name" value="Malate_DH_type2"/>
</dbReference>
<dbReference type="InterPro" id="IPR036291">
    <property type="entry name" value="NAD(P)-bd_dom_sf"/>
</dbReference>
<dbReference type="NCBIfam" id="TIGR01759">
    <property type="entry name" value="MalateDH-SF1"/>
    <property type="match status" value="1"/>
</dbReference>
<dbReference type="NCBIfam" id="TIGR01758">
    <property type="entry name" value="MDH_euk_cyt"/>
    <property type="match status" value="1"/>
</dbReference>
<dbReference type="NCBIfam" id="NF003916">
    <property type="entry name" value="PRK05442.1"/>
    <property type="match status" value="1"/>
</dbReference>
<dbReference type="PANTHER" id="PTHR23382">
    <property type="entry name" value="MALATE DEHYDROGENASE"/>
    <property type="match status" value="1"/>
</dbReference>
<dbReference type="Pfam" id="PF02866">
    <property type="entry name" value="Ldh_1_C"/>
    <property type="match status" value="1"/>
</dbReference>
<dbReference type="Pfam" id="PF00056">
    <property type="entry name" value="Ldh_1_N"/>
    <property type="match status" value="1"/>
</dbReference>
<dbReference type="PIRSF" id="PIRSF000102">
    <property type="entry name" value="Lac_mal_DH"/>
    <property type="match status" value="1"/>
</dbReference>
<dbReference type="SUPFAM" id="SSF56327">
    <property type="entry name" value="LDH C-terminal domain-like"/>
    <property type="match status" value="1"/>
</dbReference>
<dbReference type="SUPFAM" id="SSF51735">
    <property type="entry name" value="NAD(P)-binding Rossmann-fold domains"/>
    <property type="match status" value="1"/>
</dbReference>
<dbReference type="PROSITE" id="PS00068">
    <property type="entry name" value="MDH"/>
    <property type="match status" value="1"/>
</dbReference>
<proteinExistence type="evidence at protein level"/>
<protein>
    <recommendedName>
        <fullName>Malate dehydrogenase, cytoplasmic</fullName>
        <ecNumber>1.1.1.37</ecNumber>
    </recommendedName>
</protein>
<name>MDHC_BETVU</name>
<keyword id="KW-0963">Cytoplasm</keyword>
<keyword id="KW-0903">Direct protein sequencing</keyword>
<keyword id="KW-0520">NAD</keyword>
<keyword id="KW-0560">Oxidoreductase</keyword>
<keyword id="KW-0816">Tricarboxylic acid cycle</keyword>
<gene>
    <name type="primary">NR1</name>
</gene>
<organism>
    <name type="scientific">Beta vulgaris</name>
    <name type="common">Sugar beet</name>
    <dbReference type="NCBI Taxonomy" id="161934"/>
    <lineage>
        <taxon>Eukaryota</taxon>
        <taxon>Viridiplantae</taxon>
        <taxon>Streptophyta</taxon>
        <taxon>Embryophyta</taxon>
        <taxon>Tracheophyta</taxon>
        <taxon>Spermatophyta</taxon>
        <taxon>Magnoliopsida</taxon>
        <taxon>eudicotyledons</taxon>
        <taxon>Gunneridae</taxon>
        <taxon>Pentapetalae</taxon>
        <taxon>Caryophyllales</taxon>
        <taxon>Chenopodiaceae</taxon>
        <taxon>Betoideae</taxon>
        <taxon>Beta</taxon>
    </lineage>
</organism>
<evidence type="ECO:0000250" key="1"/>
<evidence type="ECO:0000250" key="2">
    <source>
        <dbReference type="UniProtKB" id="P11708"/>
    </source>
</evidence>
<evidence type="ECO:0000250" key="3">
    <source>
        <dbReference type="UniProtKB" id="P93819"/>
    </source>
</evidence>
<evidence type="ECO:0000255" key="4">
    <source>
        <dbReference type="PROSITE-ProRule" id="PRU10004"/>
    </source>
</evidence>
<evidence type="ECO:0000305" key="5"/>
<reference key="1">
    <citation type="online journal article" date="2000" name="Plant Gene Register">
        <title>A Beta vulgaris cDNA coding for a putative cytoplasmatic malate dehydrogenase.</title>
        <authorList>
            <person name="Juergensen K."/>
            <person name="Buck F."/>
            <person name="Lange S."/>
            <person name="Kleine M."/>
            <person name="Grundler F.M.W."/>
        </authorList>
        <locator>PGR00-023</locator>
    </citation>
    <scope>NUCLEOTIDE SEQUENCE [MRNA]</scope>
    <scope>PARTIAL PROTEIN SEQUENCE</scope>
</reference>